<organism>
    <name type="scientific">Shewanella sp. (strain ANA-3)</name>
    <dbReference type="NCBI Taxonomy" id="94122"/>
    <lineage>
        <taxon>Bacteria</taxon>
        <taxon>Pseudomonadati</taxon>
        <taxon>Pseudomonadota</taxon>
        <taxon>Gammaproteobacteria</taxon>
        <taxon>Alteromonadales</taxon>
        <taxon>Shewanellaceae</taxon>
        <taxon>Shewanella</taxon>
    </lineage>
</organism>
<sequence>MSDRQQVTNAKGERIAIVAGLRTPFAKQATAFHGVSALDMGKMVVNELLARSELDPKLIEQLVYGQVVQMPAAPNIAREIVLGTGMDVSTDAYSVTRACATSFQSAVNVAESIMTGNIEIGIAGGADSSSVLPIGVSKKLAHALVDLNKARSFGQKLQIFRRLGIKDLLPVPPAVAEYSTGLSMGQTAEQMAKTYNISRADQDALAHRSHTLASETWASGHLRDEVMVAHVPPYKQFIERDNNIRENSDLSSYAKLRPAFDKKHGSVTAANSTPLTDGASAIILMSEGRAKALGYQPIGYIKSYAFTAIDVWQDMLMGPSYATPLALKRAGMELEDLTLIEMHEAFAAQTLANMQMFASKKFAEEKLGRNRAIGEIDMSKFNVLGGSLAYGHPFAATGTRLITQVCRELKRRGGGTGLATACAAGGLGAAMIVEVE</sequence>
<comment type="function">
    <text evidence="1">Catalyzes the final step of fatty acid oxidation in which acetyl-CoA is released and the CoA ester of a fatty acid two carbons shorter is formed.</text>
</comment>
<comment type="catalytic activity">
    <reaction evidence="1">
        <text>an acyl-CoA + acetyl-CoA = a 3-oxoacyl-CoA + CoA</text>
        <dbReference type="Rhea" id="RHEA:21564"/>
        <dbReference type="ChEBI" id="CHEBI:57287"/>
        <dbReference type="ChEBI" id="CHEBI:57288"/>
        <dbReference type="ChEBI" id="CHEBI:58342"/>
        <dbReference type="ChEBI" id="CHEBI:90726"/>
        <dbReference type="EC" id="2.3.1.16"/>
    </reaction>
</comment>
<comment type="pathway">
    <text evidence="1">Lipid metabolism; fatty acid beta-oxidation.</text>
</comment>
<comment type="subunit">
    <text evidence="1">Heterotetramer of two alpha chains (FadJ) and two beta chains (FadI).</text>
</comment>
<comment type="subcellular location">
    <subcellularLocation>
        <location evidence="1">Cytoplasm</location>
    </subcellularLocation>
</comment>
<comment type="similarity">
    <text evidence="1">Belongs to the thiolase-like superfamily. Thiolase family.</text>
</comment>
<dbReference type="EC" id="2.3.1.16" evidence="1"/>
<dbReference type="EMBL" id="CP000469">
    <property type="protein sequence ID" value="ABK47694.1"/>
    <property type="molecule type" value="Genomic_DNA"/>
</dbReference>
<dbReference type="RefSeq" id="WP_011622190.1">
    <property type="nucleotide sequence ID" value="NC_008577.1"/>
</dbReference>
<dbReference type="SMR" id="A0KV75"/>
<dbReference type="STRING" id="94122.Shewana3_1460"/>
<dbReference type="GeneID" id="94727450"/>
<dbReference type="KEGG" id="shn:Shewana3_1460"/>
<dbReference type="eggNOG" id="COG0183">
    <property type="taxonomic scope" value="Bacteria"/>
</dbReference>
<dbReference type="HOGENOM" id="CLU_031026_2_0_6"/>
<dbReference type="OrthoDB" id="1402717at2"/>
<dbReference type="UniPathway" id="UPA00659"/>
<dbReference type="Proteomes" id="UP000002589">
    <property type="component" value="Chromosome"/>
</dbReference>
<dbReference type="GO" id="GO:0005829">
    <property type="term" value="C:cytosol"/>
    <property type="evidence" value="ECO:0007669"/>
    <property type="project" value="TreeGrafter"/>
</dbReference>
<dbReference type="GO" id="GO:0003988">
    <property type="term" value="F:acetyl-CoA C-acyltransferase activity"/>
    <property type="evidence" value="ECO:0007669"/>
    <property type="project" value="UniProtKB-UniRule"/>
</dbReference>
<dbReference type="GO" id="GO:0006635">
    <property type="term" value="P:fatty acid beta-oxidation"/>
    <property type="evidence" value="ECO:0007669"/>
    <property type="project" value="UniProtKB-UniRule"/>
</dbReference>
<dbReference type="CDD" id="cd00751">
    <property type="entry name" value="thiolase"/>
    <property type="match status" value="1"/>
</dbReference>
<dbReference type="FunFam" id="3.40.47.10:FF:000011">
    <property type="entry name" value="3-ketoacyl-CoA thiolase"/>
    <property type="match status" value="1"/>
</dbReference>
<dbReference type="Gene3D" id="3.40.47.10">
    <property type="match status" value="1"/>
</dbReference>
<dbReference type="HAMAP" id="MF_01618">
    <property type="entry name" value="FadI"/>
    <property type="match status" value="1"/>
</dbReference>
<dbReference type="InterPro" id="IPR012806">
    <property type="entry name" value="Ac-CoA_C-AcTrfase_FadI"/>
</dbReference>
<dbReference type="InterPro" id="IPR002155">
    <property type="entry name" value="Thiolase"/>
</dbReference>
<dbReference type="InterPro" id="IPR016039">
    <property type="entry name" value="Thiolase-like"/>
</dbReference>
<dbReference type="InterPro" id="IPR020610">
    <property type="entry name" value="Thiolase_AS"/>
</dbReference>
<dbReference type="InterPro" id="IPR020617">
    <property type="entry name" value="Thiolase_C"/>
</dbReference>
<dbReference type="InterPro" id="IPR020613">
    <property type="entry name" value="Thiolase_CS"/>
</dbReference>
<dbReference type="InterPro" id="IPR020616">
    <property type="entry name" value="Thiolase_N"/>
</dbReference>
<dbReference type="NCBIfam" id="TIGR01930">
    <property type="entry name" value="AcCoA-C-Actrans"/>
    <property type="match status" value="1"/>
</dbReference>
<dbReference type="NCBIfam" id="TIGR02446">
    <property type="entry name" value="FadI"/>
    <property type="match status" value="1"/>
</dbReference>
<dbReference type="NCBIfam" id="NF006516">
    <property type="entry name" value="PRK08963.1"/>
    <property type="match status" value="1"/>
</dbReference>
<dbReference type="PANTHER" id="PTHR18919:SF107">
    <property type="entry name" value="ACETYL-COA ACETYLTRANSFERASE, CYTOSOLIC"/>
    <property type="match status" value="1"/>
</dbReference>
<dbReference type="PANTHER" id="PTHR18919">
    <property type="entry name" value="ACETYL-COA C-ACYLTRANSFERASE"/>
    <property type="match status" value="1"/>
</dbReference>
<dbReference type="Pfam" id="PF02803">
    <property type="entry name" value="Thiolase_C"/>
    <property type="match status" value="1"/>
</dbReference>
<dbReference type="Pfam" id="PF00108">
    <property type="entry name" value="Thiolase_N"/>
    <property type="match status" value="1"/>
</dbReference>
<dbReference type="PIRSF" id="PIRSF000429">
    <property type="entry name" value="Ac-CoA_Ac_transf"/>
    <property type="match status" value="1"/>
</dbReference>
<dbReference type="SUPFAM" id="SSF53901">
    <property type="entry name" value="Thiolase-like"/>
    <property type="match status" value="2"/>
</dbReference>
<dbReference type="PROSITE" id="PS00737">
    <property type="entry name" value="THIOLASE_2"/>
    <property type="match status" value="1"/>
</dbReference>
<dbReference type="PROSITE" id="PS00099">
    <property type="entry name" value="THIOLASE_3"/>
    <property type="match status" value="1"/>
</dbReference>
<name>FADI_SHESA</name>
<keyword id="KW-0012">Acyltransferase</keyword>
<keyword id="KW-0963">Cytoplasm</keyword>
<keyword id="KW-0276">Fatty acid metabolism</keyword>
<keyword id="KW-0442">Lipid degradation</keyword>
<keyword id="KW-0443">Lipid metabolism</keyword>
<keyword id="KW-0808">Transferase</keyword>
<accession>A0KV75</accession>
<feature type="chain" id="PRO_1000069513" description="3-ketoacyl-CoA thiolase">
    <location>
        <begin position="1"/>
        <end position="436"/>
    </location>
</feature>
<feature type="active site" description="Acyl-thioester intermediate" evidence="1">
    <location>
        <position position="99"/>
    </location>
</feature>
<feature type="active site" description="Proton acceptor" evidence="1">
    <location>
        <position position="392"/>
    </location>
</feature>
<feature type="active site" description="Proton acceptor" evidence="1">
    <location>
        <position position="422"/>
    </location>
</feature>
<gene>
    <name evidence="1" type="primary">fadI</name>
    <name type="ordered locus">Shewana3_1460</name>
</gene>
<protein>
    <recommendedName>
        <fullName evidence="1">3-ketoacyl-CoA thiolase</fullName>
        <ecNumber evidence="1">2.3.1.16</ecNumber>
    </recommendedName>
    <alternativeName>
        <fullName evidence="1">ACSs</fullName>
    </alternativeName>
    <alternativeName>
        <fullName evidence="1">Acetyl-CoA acyltransferase</fullName>
    </alternativeName>
    <alternativeName>
        <fullName evidence="1">Acyl-CoA ligase</fullName>
    </alternativeName>
    <alternativeName>
        <fullName evidence="1">Beta-ketothiolase</fullName>
    </alternativeName>
    <alternativeName>
        <fullName evidence="1">Fatty acid oxidation complex subunit beta</fullName>
    </alternativeName>
</protein>
<reference key="1">
    <citation type="submission" date="2006-09" db="EMBL/GenBank/DDBJ databases">
        <title>Complete sequence of chromosome 1 of Shewanella sp. ANA-3.</title>
        <authorList>
            <person name="Copeland A."/>
            <person name="Lucas S."/>
            <person name="Lapidus A."/>
            <person name="Barry K."/>
            <person name="Detter J.C."/>
            <person name="Glavina del Rio T."/>
            <person name="Hammon N."/>
            <person name="Israni S."/>
            <person name="Dalin E."/>
            <person name="Tice H."/>
            <person name="Pitluck S."/>
            <person name="Chertkov O."/>
            <person name="Brettin T."/>
            <person name="Bruce D."/>
            <person name="Han C."/>
            <person name="Tapia R."/>
            <person name="Gilna P."/>
            <person name="Schmutz J."/>
            <person name="Larimer F."/>
            <person name="Land M."/>
            <person name="Hauser L."/>
            <person name="Kyrpides N."/>
            <person name="Kim E."/>
            <person name="Newman D."/>
            <person name="Salticov C."/>
            <person name="Konstantinidis K."/>
            <person name="Klappenback J."/>
            <person name="Tiedje J."/>
            <person name="Richardson P."/>
        </authorList>
    </citation>
    <scope>NUCLEOTIDE SEQUENCE [LARGE SCALE GENOMIC DNA]</scope>
    <source>
        <strain>ANA-3</strain>
    </source>
</reference>
<evidence type="ECO:0000255" key="1">
    <source>
        <dbReference type="HAMAP-Rule" id="MF_01618"/>
    </source>
</evidence>
<proteinExistence type="inferred from homology"/>